<comment type="subcellular location">
    <subcellularLocation>
        <location evidence="3">Cell membrane</location>
        <topology evidence="3">Multi-pass membrane protein</topology>
    </subcellularLocation>
</comment>
<comment type="domain">
    <text evidence="1">The VTT domain was previously called the SNARE-assoc domain. As there is no evidence that this domain associates with SNARE proteins, it was renamed as VMP1, TMEM41, and TVP38 (VTT) domain.</text>
</comment>
<comment type="similarity">
    <text evidence="3">Belongs to the TVP38/TMEM64 family.</text>
</comment>
<dbReference type="EMBL" id="U00096">
    <property type="protein sequence ID" value="AAC74820.2"/>
    <property type="molecule type" value="Genomic_DNA"/>
</dbReference>
<dbReference type="EMBL" id="AP009048">
    <property type="protein sequence ID" value="BAA15541.1"/>
    <property type="molecule type" value="Genomic_DNA"/>
</dbReference>
<dbReference type="PIR" id="F64934">
    <property type="entry name" value="F64934"/>
</dbReference>
<dbReference type="RefSeq" id="NP_416264.4">
    <property type="nucleotide sequence ID" value="NC_000913.3"/>
</dbReference>
<dbReference type="RefSeq" id="WP_001300395.1">
    <property type="nucleotide sequence ID" value="NZ_SSZK01000001.1"/>
</dbReference>
<dbReference type="BioGRID" id="4260318">
    <property type="interactions" value="127"/>
</dbReference>
<dbReference type="DIP" id="DIP-11779N"/>
<dbReference type="FunCoup" id="P76219">
    <property type="interactions" value="317"/>
</dbReference>
<dbReference type="IntAct" id="P76219">
    <property type="interactions" value="1"/>
</dbReference>
<dbReference type="STRING" id="511145.b1750"/>
<dbReference type="TCDB" id="9.B.27.1.1">
    <property type="family name" value="the death effector domain a (deda) family"/>
</dbReference>
<dbReference type="PaxDb" id="511145-b1750"/>
<dbReference type="DNASU" id="946250"/>
<dbReference type="EnsemblBacteria" id="AAC74820">
    <property type="protein sequence ID" value="AAC74820"/>
    <property type="gene ID" value="b1750"/>
</dbReference>
<dbReference type="GeneID" id="946250"/>
<dbReference type="KEGG" id="ecj:JW1739"/>
<dbReference type="KEGG" id="eco:b1750"/>
<dbReference type="KEGG" id="ecoc:C3026_09995"/>
<dbReference type="PATRIC" id="fig|1411691.4.peg.505"/>
<dbReference type="EchoBASE" id="EB3756"/>
<dbReference type="eggNOG" id="COG0398">
    <property type="taxonomic scope" value="Bacteria"/>
</dbReference>
<dbReference type="HOGENOM" id="CLU_038944_7_1_6"/>
<dbReference type="InParanoid" id="P76219"/>
<dbReference type="OMA" id="VGPWFPL"/>
<dbReference type="OrthoDB" id="9800167at2"/>
<dbReference type="PhylomeDB" id="P76219"/>
<dbReference type="BioCyc" id="EcoCyc:G6945-MONOMER"/>
<dbReference type="PRO" id="PR:P76219"/>
<dbReference type="Proteomes" id="UP000000625">
    <property type="component" value="Chromosome"/>
</dbReference>
<dbReference type="GO" id="GO:0005886">
    <property type="term" value="C:plasma membrane"/>
    <property type="evidence" value="ECO:0000314"/>
    <property type="project" value="EcoCyc"/>
</dbReference>
<dbReference type="InterPro" id="IPR032816">
    <property type="entry name" value="VTT_dom"/>
</dbReference>
<dbReference type="InterPro" id="IPR053240">
    <property type="entry name" value="VTT_domain"/>
</dbReference>
<dbReference type="PANTHER" id="PTHR46826">
    <property type="match status" value="1"/>
</dbReference>
<dbReference type="PANTHER" id="PTHR46826:SF1">
    <property type="entry name" value="TVP38_TMEM64 FAMILY MEMBRANE PROTEIN YDJX"/>
    <property type="match status" value="1"/>
</dbReference>
<dbReference type="Pfam" id="PF09335">
    <property type="entry name" value="VTT_dom"/>
    <property type="match status" value="1"/>
</dbReference>
<evidence type="ECO:0000250" key="1">
    <source>
        <dbReference type="UniProtKB" id="P76221"/>
    </source>
</evidence>
<evidence type="ECO:0000255" key="2"/>
<evidence type="ECO:0000305" key="3"/>
<name>YDJX_ECOLI</name>
<organism>
    <name type="scientific">Escherichia coli (strain K12)</name>
    <dbReference type="NCBI Taxonomy" id="83333"/>
    <lineage>
        <taxon>Bacteria</taxon>
        <taxon>Pseudomonadati</taxon>
        <taxon>Pseudomonadota</taxon>
        <taxon>Gammaproteobacteria</taxon>
        <taxon>Enterobacterales</taxon>
        <taxon>Enterobacteriaceae</taxon>
        <taxon>Escherichia</taxon>
    </lineage>
</organism>
<gene>
    <name type="primary">ydjX</name>
    <name type="ordered locus">b1750</name>
    <name type="ordered locus">JW1739</name>
</gene>
<sequence length="236" mass="26058">MNAERKFLFACLIFALVIYAIHAFGLFDLLTDLPHLQTLIRQSGFFGYSLYILLFIIATLLLLPGSILVIAGGIVFGPLLGTLLSLIAATLASSCSFLLARWLGRDLLLKYVGHSNTFQAIEKGIARNGIDFLILTRLIPLFPYNIQNYAYGLTTIAFWPYTLISALTTLPGIVIYTVMASDLANEGITLRFILQLCLAGLALFILVQLAKLYARHKHVDLSASRRSPLTHPKNEG</sequence>
<accession>P76219</accession>
<accession>P77229</accession>
<proteinExistence type="inferred from homology"/>
<keyword id="KW-1003">Cell membrane</keyword>
<keyword id="KW-0472">Membrane</keyword>
<keyword id="KW-1185">Reference proteome</keyword>
<keyword id="KW-0812">Transmembrane</keyword>
<keyword id="KW-1133">Transmembrane helix</keyword>
<feature type="chain" id="PRO_0000198633" description="TVP38/TMEM64 family membrane protein YdjX">
    <location>
        <begin position="1"/>
        <end position="236"/>
    </location>
</feature>
<feature type="transmembrane region" description="Helical" evidence="2">
    <location>
        <begin position="7"/>
        <end position="27"/>
    </location>
</feature>
<feature type="transmembrane region" description="Helical" evidence="2">
    <location>
        <begin position="50"/>
        <end position="70"/>
    </location>
</feature>
<feature type="transmembrane region" description="Helical" evidence="2">
    <location>
        <begin position="72"/>
        <end position="92"/>
    </location>
</feature>
<feature type="transmembrane region" description="Helical" evidence="2">
    <location>
        <begin position="156"/>
        <end position="176"/>
    </location>
</feature>
<feature type="transmembrane region" description="Helical" evidence="2">
    <location>
        <begin position="192"/>
        <end position="212"/>
    </location>
</feature>
<feature type="region of interest" description="VTT domain" evidence="1">
    <location>
        <begin position="73"/>
        <end position="183"/>
    </location>
</feature>
<reference key="1">
    <citation type="journal article" date="1996" name="DNA Res.">
        <title>A 570-kb DNA sequence of the Escherichia coli K-12 genome corresponding to the 28.0-40.1 min region on the linkage map.</title>
        <authorList>
            <person name="Aiba H."/>
            <person name="Baba T."/>
            <person name="Fujita K."/>
            <person name="Hayashi K."/>
            <person name="Inada T."/>
            <person name="Isono K."/>
            <person name="Itoh T."/>
            <person name="Kasai H."/>
            <person name="Kashimoto K."/>
            <person name="Kimura S."/>
            <person name="Kitakawa M."/>
            <person name="Kitagawa M."/>
            <person name="Makino K."/>
            <person name="Miki T."/>
            <person name="Mizobuchi K."/>
            <person name="Mori H."/>
            <person name="Mori T."/>
            <person name="Motomura K."/>
            <person name="Nakade S."/>
            <person name="Nakamura Y."/>
            <person name="Nashimoto H."/>
            <person name="Nishio Y."/>
            <person name="Oshima T."/>
            <person name="Saito N."/>
            <person name="Sampei G."/>
            <person name="Seki Y."/>
            <person name="Sivasundaram S."/>
            <person name="Tagami H."/>
            <person name="Takeda J."/>
            <person name="Takemoto K."/>
            <person name="Takeuchi Y."/>
            <person name="Wada C."/>
            <person name="Yamamoto Y."/>
            <person name="Horiuchi T."/>
        </authorList>
    </citation>
    <scope>NUCLEOTIDE SEQUENCE [LARGE SCALE GENOMIC DNA]</scope>
    <source>
        <strain>K12 / W3110 / ATCC 27325 / DSM 5911</strain>
    </source>
</reference>
<reference key="2">
    <citation type="journal article" date="1997" name="Science">
        <title>The complete genome sequence of Escherichia coli K-12.</title>
        <authorList>
            <person name="Blattner F.R."/>
            <person name="Plunkett G. III"/>
            <person name="Bloch C.A."/>
            <person name="Perna N.T."/>
            <person name="Burland V."/>
            <person name="Riley M."/>
            <person name="Collado-Vides J."/>
            <person name="Glasner J.D."/>
            <person name="Rode C.K."/>
            <person name="Mayhew G.F."/>
            <person name="Gregor J."/>
            <person name="Davis N.W."/>
            <person name="Kirkpatrick H.A."/>
            <person name="Goeden M.A."/>
            <person name="Rose D.J."/>
            <person name="Mau B."/>
            <person name="Shao Y."/>
        </authorList>
    </citation>
    <scope>NUCLEOTIDE SEQUENCE [LARGE SCALE GENOMIC DNA]</scope>
    <source>
        <strain>K12 / MG1655 / ATCC 47076</strain>
    </source>
</reference>
<reference key="3">
    <citation type="journal article" date="2006" name="Mol. Syst. Biol.">
        <title>Highly accurate genome sequences of Escherichia coli K-12 strains MG1655 and W3110.</title>
        <authorList>
            <person name="Hayashi K."/>
            <person name="Morooka N."/>
            <person name="Yamamoto Y."/>
            <person name="Fujita K."/>
            <person name="Isono K."/>
            <person name="Choi S."/>
            <person name="Ohtsubo E."/>
            <person name="Baba T."/>
            <person name="Wanner B.L."/>
            <person name="Mori H."/>
            <person name="Horiuchi T."/>
        </authorList>
    </citation>
    <scope>NUCLEOTIDE SEQUENCE [LARGE SCALE GENOMIC DNA]</scope>
    <source>
        <strain>K12 / W3110 / ATCC 27325 / DSM 5911</strain>
    </source>
</reference>
<protein>
    <recommendedName>
        <fullName>TVP38/TMEM64 family membrane protein YdjX</fullName>
    </recommendedName>
</protein>